<organism>
    <name type="scientific">Escherichia coli (strain K12 / DH10B)</name>
    <dbReference type="NCBI Taxonomy" id="316385"/>
    <lineage>
        <taxon>Bacteria</taxon>
        <taxon>Pseudomonadati</taxon>
        <taxon>Pseudomonadota</taxon>
        <taxon>Gammaproteobacteria</taxon>
        <taxon>Enterobacterales</taxon>
        <taxon>Enterobacteriaceae</taxon>
        <taxon>Escherichia</taxon>
    </lineage>
</organism>
<proteinExistence type="inferred from homology"/>
<comment type="function">
    <text evidence="1">Interacts with CbpA and inhibits both the DnaJ-like co-chaperone activity and the DNA binding activity of CbpA. Together with CbpA, modulates the activity of the DnaK chaperone system. Does not inhibit the co-chaperone activity of DnaJ.</text>
</comment>
<comment type="similarity">
    <text evidence="1">Belongs to the CbpM family.</text>
</comment>
<feature type="chain" id="PRO_1000137770" description="Chaperone modulatory protein CbpM">
    <location>
        <begin position="1"/>
        <end position="101"/>
    </location>
</feature>
<gene>
    <name evidence="1" type="primary">cbpM</name>
    <name type="ordered locus">ECDH10B_1071</name>
</gene>
<name>CBPM_ECODH</name>
<accession>B1X8V4</accession>
<sequence>MANVTVTFTITEFCLHTGISEEELNEIVGLGVVEPREIQETTWVFDDHAAIVVQRAVRLRHELALDWPGIAVALTLMDDIAHLKQENRLLRQRLSRFVAHP</sequence>
<reference key="1">
    <citation type="journal article" date="2008" name="J. Bacteriol.">
        <title>The complete genome sequence of Escherichia coli DH10B: insights into the biology of a laboratory workhorse.</title>
        <authorList>
            <person name="Durfee T."/>
            <person name="Nelson R."/>
            <person name="Baldwin S."/>
            <person name="Plunkett G. III"/>
            <person name="Burland V."/>
            <person name="Mau B."/>
            <person name="Petrosino J.F."/>
            <person name="Qin X."/>
            <person name="Muzny D.M."/>
            <person name="Ayele M."/>
            <person name="Gibbs R.A."/>
            <person name="Csorgo B."/>
            <person name="Posfai G."/>
            <person name="Weinstock G.M."/>
            <person name="Blattner F.R."/>
        </authorList>
    </citation>
    <scope>NUCLEOTIDE SEQUENCE [LARGE SCALE GENOMIC DNA]</scope>
    <source>
        <strain>K12 / DH10B</strain>
    </source>
</reference>
<protein>
    <recommendedName>
        <fullName evidence="1">Chaperone modulatory protein CbpM</fullName>
    </recommendedName>
</protein>
<dbReference type="EMBL" id="CP000948">
    <property type="protein sequence ID" value="ACB02200.1"/>
    <property type="molecule type" value="Genomic_DNA"/>
</dbReference>
<dbReference type="RefSeq" id="WP_000024560.1">
    <property type="nucleotide sequence ID" value="NC_010473.1"/>
</dbReference>
<dbReference type="SMR" id="B1X8V4"/>
<dbReference type="GeneID" id="93776412"/>
<dbReference type="KEGG" id="ecd:ECDH10B_1071"/>
<dbReference type="HOGENOM" id="CLU_144710_3_1_6"/>
<dbReference type="FunFam" id="1.10.1660.10:FF:000006">
    <property type="entry name" value="Chaperone modulatory protein CbpM"/>
    <property type="match status" value="1"/>
</dbReference>
<dbReference type="Gene3D" id="1.10.1660.10">
    <property type="match status" value="1"/>
</dbReference>
<dbReference type="HAMAP" id="MF_01155">
    <property type="entry name" value="CbpM"/>
    <property type="match status" value="1"/>
</dbReference>
<dbReference type="InterPro" id="IPR022835">
    <property type="entry name" value="CbpM"/>
</dbReference>
<dbReference type="NCBIfam" id="NF007617">
    <property type="entry name" value="PRK10265.1"/>
    <property type="match status" value="1"/>
</dbReference>
<dbReference type="Pfam" id="PF13591">
    <property type="entry name" value="MerR_2"/>
    <property type="match status" value="1"/>
</dbReference>
<evidence type="ECO:0000255" key="1">
    <source>
        <dbReference type="HAMAP-Rule" id="MF_01155"/>
    </source>
</evidence>